<feature type="chain" id="PRO_0000381214" description="Biotin synthase">
    <location>
        <begin position="1"/>
        <end position="339"/>
    </location>
</feature>
<feature type="domain" description="Radical SAM core" evidence="2">
    <location>
        <begin position="47"/>
        <end position="276"/>
    </location>
</feature>
<feature type="binding site" evidence="1">
    <location>
        <position position="65"/>
    </location>
    <ligand>
        <name>[4Fe-4S] cluster</name>
        <dbReference type="ChEBI" id="CHEBI:49883"/>
        <note>4Fe-4S-S-AdoMet</note>
    </ligand>
</feature>
<feature type="binding site" evidence="1">
    <location>
        <position position="69"/>
    </location>
    <ligand>
        <name>[4Fe-4S] cluster</name>
        <dbReference type="ChEBI" id="CHEBI:49883"/>
        <note>4Fe-4S-S-AdoMet</note>
    </ligand>
</feature>
<feature type="binding site" evidence="1">
    <location>
        <position position="72"/>
    </location>
    <ligand>
        <name>[4Fe-4S] cluster</name>
        <dbReference type="ChEBI" id="CHEBI:49883"/>
        <note>4Fe-4S-S-AdoMet</note>
    </ligand>
</feature>
<feature type="binding site" evidence="1">
    <location>
        <position position="109"/>
    </location>
    <ligand>
        <name>[2Fe-2S] cluster</name>
        <dbReference type="ChEBI" id="CHEBI:190135"/>
    </ligand>
</feature>
<feature type="binding site" evidence="1">
    <location>
        <position position="141"/>
    </location>
    <ligand>
        <name>[2Fe-2S] cluster</name>
        <dbReference type="ChEBI" id="CHEBI:190135"/>
    </ligand>
</feature>
<feature type="binding site" evidence="1">
    <location>
        <position position="201"/>
    </location>
    <ligand>
        <name>[2Fe-2S] cluster</name>
        <dbReference type="ChEBI" id="CHEBI:190135"/>
    </ligand>
</feature>
<feature type="binding site" evidence="1">
    <location>
        <position position="271"/>
    </location>
    <ligand>
        <name>[2Fe-2S] cluster</name>
        <dbReference type="ChEBI" id="CHEBI:190135"/>
    </ligand>
</feature>
<reference key="1">
    <citation type="journal article" date="2007" name="Nat. Biotechnol.">
        <title>Comparative analysis of the complete genome sequence of the plant growth-promoting bacterium Bacillus amyloliquefaciens FZB42.</title>
        <authorList>
            <person name="Chen X.H."/>
            <person name="Koumoutsi A."/>
            <person name="Scholz R."/>
            <person name="Eisenreich A."/>
            <person name="Schneider K."/>
            <person name="Heinemeyer I."/>
            <person name="Morgenstern B."/>
            <person name="Voss B."/>
            <person name="Hess W.R."/>
            <person name="Reva O."/>
            <person name="Junge H."/>
            <person name="Voigt B."/>
            <person name="Jungblut P.R."/>
            <person name="Vater J."/>
            <person name="Suessmuth R."/>
            <person name="Liesegang H."/>
            <person name="Strittmatter A."/>
            <person name="Gottschalk G."/>
            <person name="Borriss R."/>
        </authorList>
    </citation>
    <scope>NUCLEOTIDE SEQUENCE [LARGE SCALE GENOMIC DNA]</scope>
    <source>
        <strain>DSM 23117 / BGSC 10A6 / LMG 26770 / FZB42</strain>
    </source>
</reference>
<protein>
    <recommendedName>
        <fullName evidence="1">Biotin synthase</fullName>
        <ecNumber evidence="1">2.8.1.6</ecNumber>
    </recommendedName>
</protein>
<comment type="function">
    <text evidence="1">Catalyzes the conversion of dethiobiotin (DTB) to biotin by the insertion of a sulfur atom into dethiobiotin via a radical-based mechanism.</text>
</comment>
<comment type="catalytic activity">
    <reaction evidence="1">
        <text>(4R,5S)-dethiobiotin + (sulfur carrier)-SH + 2 reduced [2Fe-2S]-[ferredoxin] + 2 S-adenosyl-L-methionine = (sulfur carrier)-H + biotin + 2 5'-deoxyadenosine + 2 L-methionine + 2 oxidized [2Fe-2S]-[ferredoxin]</text>
        <dbReference type="Rhea" id="RHEA:22060"/>
        <dbReference type="Rhea" id="RHEA-COMP:10000"/>
        <dbReference type="Rhea" id="RHEA-COMP:10001"/>
        <dbReference type="Rhea" id="RHEA-COMP:14737"/>
        <dbReference type="Rhea" id="RHEA-COMP:14739"/>
        <dbReference type="ChEBI" id="CHEBI:17319"/>
        <dbReference type="ChEBI" id="CHEBI:29917"/>
        <dbReference type="ChEBI" id="CHEBI:33737"/>
        <dbReference type="ChEBI" id="CHEBI:33738"/>
        <dbReference type="ChEBI" id="CHEBI:57586"/>
        <dbReference type="ChEBI" id="CHEBI:57844"/>
        <dbReference type="ChEBI" id="CHEBI:59789"/>
        <dbReference type="ChEBI" id="CHEBI:64428"/>
        <dbReference type="ChEBI" id="CHEBI:149473"/>
        <dbReference type="EC" id="2.8.1.6"/>
    </reaction>
</comment>
<comment type="cofactor">
    <cofactor evidence="1">
        <name>[4Fe-4S] cluster</name>
        <dbReference type="ChEBI" id="CHEBI:49883"/>
    </cofactor>
    <text evidence="1">Binds 1 [4Fe-4S] cluster. The cluster is coordinated with 3 cysteines and an exchangeable S-adenosyl-L-methionine.</text>
</comment>
<comment type="cofactor">
    <cofactor evidence="1">
        <name>[2Fe-2S] cluster</name>
        <dbReference type="ChEBI" id="CHEBI:190135"/>
    </cofactor>
    <text evidence="1">Binds 1 [2Fe-2S] cluster. The cluster is coordinated with 3 cysteines and 1 arginine.</text>
</comment>
<comment type="pathway">
    <text evidence="1">Cofactor biosynthesis; biotin biosynthesis; biotin from 7,8-diaminononanoate: step 2/2.</text>
</comment>
<comment type="subunit">
    <text evidence="1">Homodimer.</text>
</comment>
<comment type="similarity">
    <text evidence="1">Belongs to the radical SAM superfamily. Biotin synthase family.</text>
</comment>
<evidence type="ECO:0000255" key="1">
    <source>
        <dbReference type="HAMAP-Rule" id="MF_01694"/>
    </source>
</evidence>
<evidence type="ECO:0000255" key="2">
    <source>
        <dbReference type="PROSITE-ProRule" id="PRU01266"/>
    </source>
</evidence>
<accession>A7Z5B2</accession>
<dbReference type="EC" id="2.8.1.6" evidence="1"/>
<dbReference type="EMBL" id="CP000560">
    <property type="protein sequence ID" value="ABS74188.1"/>
    <property type="molecule type" value="Genomic_DNA"/>
</dbReference>
<dbReference type="RefSeq" id="WP_007410132.1">
    <property type="nucleotide sequence ID" value="NC_009725.2"/>
</dbReference>
<dbReference type="SMR" id="A7Z5B2"/>
<dbReference type="GeneID" id="93080954"/>
<dbReference type="KEGG" id="bay:RBAM_018250"/>
<dbReference type="HOGENOM" id="CLU_033172_2_1_9"/>
<dbReference type="UniPathway" id="UPA00078">
    <property type="reaction ID" value="UER00162"/>
</dbReference>
<dbReference type="Proteomes" id="UP000001120">
    <property type="component" value="Chromosome"/>
</dbReference>
<dbReference type="GO" id="GO:0051537">
    <property type="term" value="F:2 iron, 2 sulfur cluster binding"/>
    <property type="evidence" value="ECO:0007669"/>
    <property type="project" value="UniProtKB-KW"/>
</dbReference>
<dbReference type="GO" id="GO:0051539">
    <property type="term" value="F:4 iron, 4 sulfur cluster binding"/>
    <property type="evidence" value="ECO:0007669"/>
    <property type="project" value="UniProtKB-KW"/>
</dbReference>
<dbReference type="GO" id="GO:0004076">
    <property type="term" value="F:biotin synthase activity"/>
    <property type="evidence" value="ECO:0007669"/>
    <property type="project" value="UniProtKB-UniRule"/>
</dbReference>
<dbReference type="GO" id="GO:0005506">
    <property type="term" value="F:iron ion binding"/>
    <property type="evidence" value="ECO:0007669"/>
    <property type="project" value="UniProtKB-UniRule"/>
</dbReference>
<dbReference type="GO" id="GO:0009102">
    <property type="term" value="P:biotin biosynthetic process"/>
    <property type="evidence" value="ECO:0007669"/>
    <property type="project" value="UniProtKB-UniRule"/>
</dbReference>
<dbReference type="CDD" id="cd01335">
    <property type="entry name" value="Radical_SAM"/>
    <property type="match status" value="1"/>
</dbReference>
<dbReference type="FunFam" id="3.20.20.70:FF:000026">
    <property type="entry name" value="Biotin synthase"/>
    <property type="match status" value="1"/>
</dbReference>
<dbReference type="Gene3D" id="3.20.20.70">
    <property type="entry name" value="Aldolase class I"/>
    <property type="match status" value="1"/>
</dbReference>
<dbReference type="HAMAP" id="MF_01694">
    <property type="entry name" value="BioB"/>
    <property type="match status" value="1"/>
</dbReference>
<dbReference type="InterPro" id="IPR013785">
    <property type="entry name" value="Aldolase_TIM"/>
</dbReference>
<dbReference type="InterPro" id="IPR010722">
    <property type="entry name" value="BATS_dom"/>
</dbReference>
<dbReference type="InterPro" id="IPR002684">
    <property type="entry name" value="Biotin_synth/BioAB"/>
</dbReference>
<dbReference type="InterPro" id="IPR024177">
    <property type="entry name" value="Biotin_synthase"/>
</dbReference>
<dbReference type="InterPro" id="IPR006638">
    <property type="entry name" value="Elp3/MiaA/NifB-like_rSAM"/>
</dbReference>
<dbReference type="InterPro" id="IPR007197">
    <property type="entry name" value="rSAM"/>
</dbReference>
<dbReference type="NCBIfam" id="TIGR00433">
    <property type="entry name" value="bioB"/>
    <property type="match status" value="1"/>
</dbReference>
<dbReference type="PANTHER" id="PTHR22976">
    <property type="entry name" value="BIOTIN SYNTHASE"/>
    <property type="match status" value="1"/>
</dbReference>
<dbReference type="PANTHER" id="PTHR22976:SF2">
    <property type="entry name" value="BIOTIN SYNTHASE, MITOCHONDRIAL"/>
    <property type="match status" value="1"/>
</dbReference>
<dbReference type="Pfam" id="PF06968">
    <property type="entry name" value="BATS"/>
    <property type="match status" value="1"/>
</dbReference>
<dbReference type="Pfam" id="PF04055">
    <property type="entry name" value="Radical_SAM"/>
    <property type="match status" value="1"/>
</dbReference>
<dbReference type="PIRSF" id="PIRSF001619">
    <property type="entry name" value="Biotin_synth"/>
    <property type="match status" value="1"/>
</dbReference>
<dbReference type="SFLD" id="SFLDG01278">
    <property type="entry name" value="biotin_synthase_like"/>
    <property type="match status" value="1"/>
</dbReference>
<dbReference type="SFLD" id="SFLDS00029">
    <property type="entry name" value="Radical_SAM"/>
    <property type="match status" value="1"/>
</dbReference>
<dbReference type="SMART" id="SM00876">
    <property type="entry name" value="BATS"/>
    <property type="match status" value="1"/>
</dbReference>
<dbReference type="SMART" id="SM00729">
    <property type="entry name" value="Elp3"/>
    <property type="match status" value="1"/>
</dbReference>
<dbReference type="SUPFAM" id="SSF102114">
    <property type="entry name" value="Radical SAM enzymes"/>
    <property type="match status" value="1"/>
</dbReference>
<dbReference type="PROSITE" id="PS51918">
    <property type="entry name" value="RADICAL_SAM"/>
    <property type="match status" value="1"/>
</dbReference>
<organism>
    <name type="scientific">Bacillus velezensis (strain DSM 23117 / BGSC 10A6 / LMG 26770 / FZB42)</name>
    <name type="common">Bacillus amyloliquefaciens subsp. plantarum</name>
    <dbReference type="NCBI Taxonomy" id="326423"/>
    <lineage>
        <taxon>Bacteria</taxon>
        <taxon>Bacillati</taxon>
        <taxon>Bacillota</taxon>
        <taxon>Bacilli</taxon>
        <taxon>Bacillales</taxon>
        <taxon>Bacillaceae</taxon>
        <taxon>Bacillus</taxon>
        <taxon>Bacillus amyloliquefaciens group</taxon>
    </lineage>
</organism>
<keyword id="KW-0001">2Fe-2S</keyword>
<keyword id="KW-0004">4Fe-4S</keyword>
<keyword id="KW-0093">Biotin biosynthesis</keyword>
<keyword id="KW-0408">Iron</keyword>
<keyword id="KW-0411">Iron-sulfur</keyword>
<keyword id="KW-0479">Metal-binding</keyword>
<keyword id="KW-0949">S-adenosyl-L-methionine</keyword>
<keyword id="KW-0808">Transferase</keyword>
<gene>
    <name evidence="1" type="primary">bioB</name>
    <name type="ordered locus">RBAM_018250</name>
</gene>
<proteinExistence type="inferred from homology"/>
<sequence length="339" mass="37483">MNQWMDLAERVLDGAEVTNQEALAILNCPDEDLLLLMHAAFHIRKRFYGKKVKLNMIMNAKSGLCPENCGYCSQSSISKAPIESYRMVDKHILLKGAKRAHDLNIGTYCIVASGRGPSNREVDQVVDAVKEIKETYGLKICACLGLLKPEQAERLKQAGVDRYNHNINTSQRNHSNITTSHTYDDRVNTVETAKQSGMSPCSGVIVGMKETKQDVIDMANSLKALDADSIPVNFLHAIDGTPLEGVSELHPVYCLKVLALFRFINPSKEIRISGGREVNLRSLQPLGLYAANSIFVGDYLTTAGQQETEDHQMLHDLGFEVESVEEMKAGLQSACNTEV</sequence>
<name>BIOB_BACVZ</name>